<organism>
    <name type="scientific">Escherichia coli O6:H1 (strain CFT073 / ATCC 700928 / UPEC)</name>
    <dbReference type="NCBI Taxonomy" id="199310"/>
    <lineage>
        <taxon>Bacteria</taxon>
        <taxon>Pseudomonadati</taxon>
        <taxon>Pseudomonadota</taxon>
        <taxon>Gammaproteobacteria</taxon>
        <taxon>Enterobacterales</taxon>
        <taxon>Enterobacteriaceae</taxon>
        <taxon>Escherichia</taxon>
    </lineage>
</organism>
<sequence length="291" mass="32538">MAEVTQLKRYDARPINWGKWFLIGIGMLVSAFILLVPMIYIFVQAFSKGLMPVLQNLADPDMLHAIWLTVMIALIAVPVNLVFGILLAWLVTRFNFPGRQLLLTLLDIPFAVSPVVAGLVYLLFYGSNGPLGGWLDEHNLQIMFSWPGMVLVTIFVTCPFVVRELVPVMLSQGSQEDEAAILLGASGWQMFRRVTLPNIRWALLYGVVLTNARAIGEFGAVSVVSGSIRGETLSLPLQIELLEQDYNTVGSFTAAALLTLMAIITLFLKSMLQWRLENQEKRAQQEEHHEH</sequence>
<protein>
    <recommendedName>
        <fullName>Sulfate transport system permease protein CysW</fullName>
    </recommendedName>
</protein>
<name>CYSW_ECOL6</name>
<keyword id="KW-0997">Cell inner membrane</keyword>
<keyword id="KW-1003">Cell membrane</keyword>
<keyword id="KW-0472">Membrane</keyword>
<keyword id="KW-1185">Reference proteome</keyword>
<keyword id="KW-0764">Sulfate transport</keyword>
<keyword id="KW-0812">Transmembrane</keyword>
<keyword id="KW-1133">Transmembrane helix</keyword>
<keyword id="KW-0813">Transport</keyword>
<feature type="chain" id="PRO_0000059998" description="Sulfate transport system permease protein CysW">
    <location>
        <begin position="1"/>
        <end position="291"/>
    </location>
</feature>
<feature type="topological domain" description="Cytoplasmic" evidence="2">
    <location>
        <begin position="1"/>
        <end position="22"/>
    </location>
</feature>
<feature type="transmembrane region" description="Helical" evidence="3">
    <location>
        <begin position="23"/>
        <end position="43"/>
    </location>
</feature>
<feature type="topological domain" description="Periplasmic" evidence="2">
    <location>
        <begin position="44"/>
        <end position="69"/>
    </location>
</feature>
<feature type="transmembrane region" description="Helical" evidence="3">
    <location>
        <begin position="70"/>
        <end position="90"/>
    </location>
</feature>
<feature type="topological domain" description="Cytoplasmic" evidence="2">
    <location>
        <begin position="91"/>
        <end position="104"/>
    </location>
</feature>
<feature type="transmembrane region" description="Helical" evidence="3">
    <location>
        <begin position="105"/>
        <end position="125"/>
    </location>
</feature>
<feature type="topological domain" description="Periplasmic" evidence="2">
    <location>
        <begin position="126"/>
        <end position="141"/>
    </location>
</feature>
<feature type="transmembrane region" description="Helical" evidence="3">
    <location>
        <begin position="142"/>
        <end position="162"/>
    </location>
</feature>
<feature type="topological domain" description="Cytoplasmic" evidence="2">
    <location>
        <begin position="163"/>
        <end position="200"/>
    </location>
</feature>
<feature type="transmembrane region" description="Helical" evidence="3">
    <location>
        <begin position="201"/>
        <end position="221"/>
    </location>
</feature>
<feature type="topological domain" description="Periplasmic" evidence="2">
    <location>
        <begin position="222"/>
        <end position="247"/>
    </location>
</feature>
<feature type="transmembrane region" description="Helical" evidence="3">
    <location>
        <begin position="248"/>
        <end position="268"/>
    </location>
</feature>
<feature type="topological domain" description="Cytoplasmic" evidence="2">
    <location>
        <begin position="269"/>
        <end position="291"/>
    </location>
</feature>
<feature type="domain" description="ABC transmembrane type-1" evidence="3">
    <location>
        <begin position="66"/>
        <end position="270"/>
    </location>
</feature>
<reference key="1">
    <citation type="journal article" date="2002" name="Proc. Natl. Acad. Sci. U.S.A.">
        <title>Extensive mosaic structure revealed by the complete genome sequence of uropathogenic Escherichia coli.</title>
        <authorList>
            <person name="Welch R.A."/>
            <person name="Burland V."/>
            <person name="Plunkett G. III"/>
            <person name="Redford P."/>
            <person name="Roesch P."/>
            <person name="Rasko D."/>
            <person name="Buckles E.L."/>
            <person name="Liou S.-R."/>
            <person name="Boutin A."/>
            <person name="Hackett J."/>
            <person name="Stroud D."/>
            <person name="Mayhew G.F."/>
            <person name="Rose D.J."/>
            <person name="Zhou S."/>
            <person name="Schwartz D.C."/>
            <person name="Perna N.T."/>
            <person name="Mobley H.L.T."/>
            <person name="Donnenberg M.S."/>
            <person name="Blattner F.R."/>
        </authorList>
    </citation>
    <scope>NUCLEOTIDE SEQUENCE [LARGE SCALE GENOMIC DNA]</scope>
    <source>
        <strain>CFT073 / ATCC 700928 / UPEC</strain>
    </source>
</reference>
<proteinExistence type="inferred from homology"/>
<gene>
    <name type="primary">cysW</name>
    <name type="ordered locus">c2957</name>
</gene>
<comment type="function">
    <text>Part of the ABC transporter complex CysAWTP (TC 3.A.1.6.1) involved in sulfate/thiosulfate import. Probably responsible for the translocation of the substrate across the membrane.</text>
</comment>
<comment type="subunit">
    <text evidence="4">The complex is composed of two ATP-binding proteins (CysA), two transmembrane proteins (CysT and CysW) and a solute-binding protein (CysP).</text>
</comment>
<comment type="subcellular location">
    <subcellularLocation>
        <location evidence="1">Cell inner membrane</location>
        <topology evidence="3">Multi-pass membrane protein</topology>
    </subcellularLocation>
</comment>
<comment type="similarity">
    <text evidence="4">Belongs to the binding-protein-dependent transport system permease family. CysTW subfamily.</text>
</comment>
<accession>P0AEB1</accession>
<accession>P16702</accession>
<accession>P76534</accession>
<dbReference type="EMBL" id="AE014075">
    <property type="protein sequence ID" value="AAN81407.1"/>
    <property type="molecule type" value="Genomic_DNA"/>
</dbReference>
<dbReference type="RefSeq" id="WP_000852686.1">
    <property type="nucleotide sequence ID" value="NZ_CP051263.1"/>
</dbReference>
<dbReference type="SMR" id="P0AEB1"/>
<dbReference type="STRING" id="199310.c2957"/>
<dbReference type="GeneID" id="93774708"/>
<dbReference type="KEGG" id="ecc:c2957"/>
<dbReference type="eggNOG" id="COG4208">
    <property type="taxonomic scope" value="Bacteria"/>
</dbReference>
<dbReference type="HOGENOM" id="CLU_016047_14_0_6"/>
<dbReference type="BioCyc" id="ECOL199310:C2957-MONOMER"/>
<dbReference type="Proteomes" id="UP000001410">
    <property type="component" value="Chromosome"/>
</dbReference>
<dbReference type="GO" id="GO:0005886">
    <property type="term" value="C:plasma membrane"/>
    <property type="evidence" value="ECO:0007669"/>
    <property type="project" value="UniProtKB-SubCell"/>
</dbReference>
<dbReference type="GO" id="GO:0015419">
    <property type="term" value="F:ABC-type sulfate transporter activity"/>
    <property type="evidence" value="ECO:0007669"/>
    <property type="project" value="InterPro"/>
</dbReference>
<dbReference type="CDD" id="cd06261">
    <property type="entry name" value="TM_PBP2"/>
    <property type="match status" value="1"/>
</dbReference>
<dbReference type="FunFam" id="1.10.3720.10:FF:000015">
    <property type="entry name" value="Sulfate ABC transporter, permease CysW"/>
    <property type="match status" value="1"/>
</dbReference>
<dbReference type="Gene3D" id="1.10.3720.10">
    <property type="entry name" value="MetI-like"/>
    <property type="match status" value="1"/>
</dbReference>
<dbReference type="InterPro" id="IPR011866">
    <property type="entry name" value="CysW_permease"/>
</dbReference>
<dbReference type="InterPro" id="IPR000515">
    <property type="entry name" value="MetI-like"/>
</dbReference>
<dbReference type="InterPro" id="IPR035906">
    <property type="entry name" value="MetI-like_sf"/>
</dbReference>
<dbReference type="InterPro" id="IPR005667">
    <property type="entry name" value="Sulph_transpt2"/>
</dbReference>
<dbReference type="NCBIfam" id="TIGR00969">
    <property type="entry name" value="3a0106s02"/>
    <property type="match status" value="1"/>
</dbReference>
<dbReference type="NCBIfam" id="TIGR02140">
    <property type="entry name" value="permease_CysW"/>
    <property type="match status" value="1"/>
</dbReference>
<dbReference type="NCBIfam" id="NF008620">
    <property type="entry name" value="PRK11602.1"/>
    <property type="match status" value="1"/>
</dbReference>
<dbReference type="PANTHER" id="PTHR30406">
    <property type="entry name" value="SULFATE TRANSPORT SYSTEM PERMEASE PROTEIN"/>
    <property type="match status" value="1"/>
</dbReference>
<dbReference type="PANTHER" id="PTHR30406:SF9">
    <property type="entry name" value="SULFATE TRANSPORT SYSTEM PERMEASE PROTEIN CYSW"/>
    <property type="match status" value="1"/>
</dbReference>
<dbReference type="Pfam" id="PF00528">
    <property type="entry name" value="BPD_transp_1"/>
    <property type="match status" value="1"/>
</dbReference>
<dbReference type="SUPFAM" id="SSF161098">
    <property type="entry name" value="MetI-like"/>
    <property type="match status" value="1"/>
</dbReference>
<dbReference type="PROSITE" id="PS50928">
    <property type="entry name" value="ABC_TM1"/>
    <property type="match status" value="1"/>
</dbReference>
<evidence type="ECO:0000250" key="1"/>
<evidence type="ECO:0000255" key="2"/>
<evidence type="ECO:0000255" key="3">
    <source>
        <dbReference type="PROSITE-ProRule" id="PRU00441"/>
    </source>
</evidence>
<evidence type="ECO:0000305" key="4"/>